<dbReference type="EC" id="2.7.2.1" evidence="1"/>
<dbReference type="EMBL" id="AE017262">
    <property type="protein sequence ID" value="AAT03952.1"/>
    <property type="molecule type" value="Genomic_DNA"/>
</dbReference>
<dbReference type="RefSeq" id="WP_003724707.1">
    <property type="nucleotide sequence ID" value="NC_002973.6"/>
</dbReference>
<dbReference type="SMR" id="Q720R2"/>
<dbReference type="KEGG" id="lmf:LMOf2365_1176"/>
<dbReference type="HOGENOM" id="CLU_020352_0_1_9"/>
<dbReference type="UniPathway" id="UPA00340">
    <property type="reaction ID" value="UER00458"/>
</dbReference>
<dbReference type="GO" id="GO:0005737">
    <property type="term" value="C:cytoplasm"/>
    <property type="evidence" value="ECO:0007669"/>
    <property type="project" value="UniProtKB-SubCell"/>
</dbReference>
<dbReference type="GO" id="GO:0008776">
    <property type="term" value="F:acetate kinase activity"/>
    <property type="evidence" value="ECO:0007669"/>
    <property type="project" value="UniProtKB-UniRule"/>
</dbReference>
<dbReference type="GO" id="GO:0005524">
    <property type="term" value="F:ATP binding"/>
    <property type="evidence" value="ECO:0007669"/>
    <property type="project" value="UniProtKB-KW"/>
</dbReference>
<dbReference type="GO" id="GO:0000287">
    <property type="term" value="F:magnesium ion binding"/>
    <property type="evidence" value="ECO:0007669"/>
    <property type="project" value="UniProtKB-UniRule"/>
</dbReference>
<dbReference type="GO" id="GO:0006083">
    <property type="term" value="P:acetate metabolic process"/>
    <property type="evidence" value="ECO:0007669"/>
    <property type="project" value="TreeGrafter"/>
</dbReference>
<dbReference type="GO" id="GO:0006085">
    <property type="term" value="P:acetyl-CoA biosynthetic process"/>
    <property type="evidence" value="ECO:0007669"/>
    <property type="project" value="UniProtKB-UniRule"/>
</dbReference>
<dbReference type="CDD" id="cd24010">
    <property type="entry name" value="ASKHA_NBD_AcK_PK"/>
    <property type="match status" value="1"/>
</dbReference>
<dbReference type="FunFam" id="3.30.420.40:FF:000338">
    <property type="entry name" value="Acetate kinase"/>
    <property type="match status" value="1"/>
</dbReference>
<dbReference type="FunFam" id="3.30.420.40:FF:000358">
    <property type="entry name" value="Acetate kinase"/>
    <property type="match status" value="1"/>
</dbReference>
<dbReference type="Gene3D" id="3.30.420.40">
    <property type="match status" value="2"/>
</dbReference>
<dbReference type="HAMAP" id="MF_00020">
    <property type="entry name" value="Acetate_kinase"/>
    <property type="match status" value="1"/>
</dbReference>
<dbReference type="InterPro" id="IPR004372">
    <property type="entry name" value="Ac/propionate_kinase"/>
</dbReference>
<dbReference type="InterPro" id="IPR000890">
    <property type="entry name" value="Aliphatic_acid_kin_short-chain"/>
</dbReference>
<dbReference type="InterPro" id="IPR023865">
    <property type="entry name" value="Aliphatic_acid_kinase_CS"/>
</dbReference>
<dbReference type="InterPro" id="IPR043129">
    <property type="entry name" value="ATPase_NBD"/>
</dbReference>
<dbReference type="NCBIfam" id="TIGR00016">
    <property type="entry name" value="ackA"/>
    <property type="match status" value="1"/>
</dbReference>
<dbReference type="PANTHER" id="PTHR21060">
    <property type="entry name" value="ACETATE KINASE"/>
    <property type="match status" value="1"/>
</dbReference>
<dbReference type="PANTHER" id="PTHR21060:SF15">
    <property type="entry name" value="ACETATE KINASE-RELATED"/>
    <property type="match status" value="1"/>
</dbReference>
<dbReference type="Pfam" id="PF00871">
    <property type="entry name" value="Acetate_kinase"/>
    <property type="match status" value="1"/>
</dbReference>
<dbReference type="PIRSF" id="PIRSF000722">
    <property type="entry name" value="Acetate_prop_kin"/>
    <property type="match status" value="1"/>
</dbReference>
<dbReference type="PRINTS" id="PR00471">
    <property type="entry name" value="ACETATEKNASE"/>
</dbReference>
<dbReference type="SUPFAM" id="SSF53067">
    <property type="entry name" value="Actin-like ATPase domain"/>
    <property type="match status" value="2"/>
</dbReference>
<dbReference type="PROSITE" id="PS01075">
    <property type="entry name" value="ACETATE_KINASE_1"/>
    <property type="match status" value="1"/>
</dbReference>
<dbReference type="PROSITE" id="PS01076">
    <property type="entry name" value="ACETATE_KINASE_2"/>
    <property type="match status" value="1"/>
</dbReference>
<protein>
    <recommendedName>
        <fullName evidence="1">Acetate kinase 1</fullName>
        <ecNumber evidence="1">2.7.2.1</ecNumber>
    </recommendedName>
    <alternativeName>
        <fullName evidence="1">Acetokinase 1</fullName>
    </alternativeName>
</protein>
<reference key="1">
    <citation type="journal article" date="2004" name="Nucleic Acids Res.">
        <title>Whole genome comparisons of serotype 4b and 1/2a strains of the food-borne pathogen Listeria monocytogenes reveal new insights into the core genome components of this species.</title>
        <authorList>
            <person name="Nelson K.E."/>
            <person name="Fouts D.E."/>
            <person name="Mongodin E.F."/>
            <person name="Ravel J."/>
            <person name="DeBoy R.T."/>
            <person name="Kolonay J.F."/>
            <person name="Rasko D.A."/>
            <person name="Angiuoli S.V."/>
            <person name="Gill S.R."/>
            <person name="Paulsen I.T."/>
            <person name="Peterson J.D."/>
            <person name="White O."/>
            <person name="Nelson W.C."/>
            <person name="Nierman W.C."/>
            <person name="Beanan M.J."/>
            <person name="Brinkac L.M."/>
            <person name="Daugherty S.C."/>
            <person name="Dodson R.J."/>
            <person name="Durkin A.S."/>
            <person name="Madupu R."/>
            <person name="Haft D.H."/>
            <person name="Selengut J."/>
            <person name="Van Aken S.E."/>
            <person name="Khouri H.M."/>
            <person name="Fedorova N."/>
            <person name="Forberger H.A."/>
            <person name="Tran B."/>
            <person name="Kathariou S."/>
            <person name="Wonderling L.D."/>
            <person name="Uhlich G.A."/>
            <person name="Bayles D.O."/>
            <person name="Luchansky J.B."/>
            <person name="Fraser C.M."/>
        </authorList>
    </citation>
    <scope>NUCLEOTIDE SEQUENCE [LARGE SCALE GENOMIC DNA]</scope>
    <source>
        <strain>F2365</strain>
    </source>
</reference>
<evidence type="ECO:0000255" key="1">
    <source>
        <dbReference type="HAMAP-Rule" id="MF_00020"/>
    </source>
</evidence>
<comment type="function">
    <text evidence="1">Catalyzes the formation of acetyl phosphate from acetate and ATP. Can also catalyze the reverse reaction.</text>
</comment>
<comment type="catalytic activity">
    <reaction evidence="1">
        <text>acetate + ATP = acetyl phosphate + ADP</text>
        <dbReference type="Rhea" id="RHEA:11352"/>
        <dbReference type="ChEBI" id="CHEBI:22191"/>
        <dbReference type="ChEBI" id="CHEBI:30089"/>
        <dbReference type="ChEBI" id="CHEBI:30616"/>
        <dbReference type="ChEBI" id="CHEBI:456216"/>
        <dbReference type="EC" id="2.7.2.1"/>
    </reaction>
</comment>
<comment type="cofactor">
    <cofactor evidence="1">
        <name>Mg(2+)</name>
        <dbReference type="ChEBI" id="CHEBI:18420"/>
    </cofactor>
    <cofactor evidence="1">
        <name>Mn(2+)</name>
        <dbReference type="ChEBI" id="CHEBI:29035"/>
    </cofactor>
    <text evidence="1">Mg(2+). Can also accept Mn(2+).</text>
</comment>
<comment type="pathway">
    <text evidence="1">Metabolic intermediate biosynthesis; acetyl-CoA biosynthesis; acetyl-CoA from acetate: step 1/2.</text>
</comment>
<comment type="subunit">
    <text evidence="1">Homodimer.</text>
</comment>
<comment type="subcellular location">
    <subcellularLocation>
        <location evidence="1">Cytoplasm</location>
    </subcellularLocation>
</comment>
<comment type="similarity">
    <text evidence="1">Belongs to the acetokinase family.</text>
</comment>
<keyword id="KW-0067">ATP-binding</keyword>
<keyword id="KW-0963">Cytoplasm</keyword>
<keyword id="KW-0418">Kinase</keyword>
<keyword id="KW-0460">Magnesium</keyword>
<keyword id="KW-0479">Metal-binding</keyword>
<keyword id="KW-0547">Nucleotide-binding</keyword>
<keyword id="KW-0808">Transferase</keyword>
<name>ACKA1_LISMF</name>
<feature type="chain" id="PRO_0000107577" description="Acetate kinase 1">
    <location>
        <begin position="1"/>
        <end position="397"/>
    </location>
</feature>
<feature type="active site" description="Proton donor/acceptor" evidence="1">
    <location>
        <position position="146"/>
    </location>
</feature>
<feature type="binding site" evidence="1">
    <location>
        <position position="8"/>
    </location>
    <ligand>
        <name>Mg(2+)</name>
        <dbReference type="ChEBI" id="CHEBI:18420"/>
    </ligand>
</feature>
<feature type="binding site" evidence="1">
    <location>
        <position position="15"/>
    </location>
    <ligand>
        <name>ATP</name>
        <dbReference type="ChEBI" id="CHEBI:30616"/>
    </ligand>
</feature>
<feature type="binding site" evidence="1">
    <location>
        <position position="89"/>
    </location>
    <ligand>
        <name>substrate</name>
    </ligand>
</feature>
<feature type="binding site" evidence="1">
    <location>
        <begin position="206"/>
        <end position="210"/>
    </location>
    <ligand>
        <name>ATP</name>
        <dbReference type="ChEBI" id="CHEBI:30616"/>
    </ligand>
</feature>
<feature type="binding site" evidence="1">
    <location>
        <begin position="281"/>
        <end position="283"/>
    </location>
    <ligand>
        <name>ATP</name>
        <dbReference type="ChEBI" id="CHEBI:30616"/>
    </ligand>
</feature>
<feature type="binding site" evidence="1">
    <location>
        <begin position="329"/>
        <end position="333"/>
    </location>
    <ligand>
        <name>ATP</name>
        <dbReference type="ChEBI" id="CHEBI:30616"/>
    </ligand>
</feature>
<feature type="binding site" evidence="1">
    <location>
        <position position="380"/>
    </location>
    <ligand>
        <name>Mg(2+)</name>
        <dbReference type="ChEBI" id="CHEBI:18420"/>
    </ligand>
</feature>
<feature type="site" description="Transition state stabilizer" evidence="1">
    <location>
        <position position="178"/>
    </location>
</feature>
<feature type="site" description="Transition state stabilizer" evidence="1">
    <location>
        <position position="239"/>
    </location>
</feature>
<organism>
    <name type="scientific">Listeria monocytogenes serotype 4b (strain F2365)</name>
    <dbReference type="NCBI Taxonomy" id="265669"/>
    <lineage>
        <taxon>Bacteria</taxon>
        <taxon>Bacillati</taxon>
        <taxon>Bacillota</taxon>
        <taxon>Bacilli</taxon>
        <taxon>Bacillales</taxon>
        <taxon>Listeriaceae</taxon>
        <taxon>Listeria</taxon>
    </lineage>
</organism>
<accession>Q720R2</accession>
<sequence length="397" mass="43150">MHKIMAINAGSSSLKFQIFTMPGEEVLVKGLIERIGLPDAIFNMSFQNEKIKEIRAINNHGEAVEILLEQLKAHQVINDLSEITGVGHRVAHGGEDFVTSCVVTDEVVKGIEAVTNLAPLHNPANIIGIKTFRELLPNAVSVAVFDTAFHQTIPEENFLYALPYELYEKHHIRKYGFHGTSHKYVAGKAAEVLEKPLEKLKIISCHLGNGASVCAIEAGKSVNTSMGFTPNAGLMMGTRSGTIDATIIPYLVDELGYSLDEVMHMMSSESGVLGVSGISSDFRDIEIAAKEGNSRALLTLRMFTGQICNYIGAYASAMNGCDALLFTAGVGENSPLIRQMVTEQLSYLGVTCHVTKNNAGDMIISNDDEAVKVCIIPTNEELMIARDVEKYAKQTIS</sequence>
<proteinExistence type="inferred from homology"/>
<gene>
    <name evidence="1" type="primary">ackA1</name>
    <name type="ordered locus">LMOf2365_1176</name>
</gene>